<accession>Q1R089</accession>
<gene>
    <name evidence="1" type="primary">hisC</name>
    <name type="ordered locus">Csal_0507</name>
</gene>
<protein>
    <recommendedName>
        <fullName evidence="1">Histidinol-phosphate aminotransferase</fullName>
        <ecNumber evidence="1">2.6.1.9</ecNumber>
    </recommendedName>
    <alternativeName>
        <fullName evidence="1">Imidazole acetol-phosphate transaminase</fullName>
    </alternativeName>
</protein>
<sequence length="351" mass="39535">MSKFWSPAVRELTPYVPGEQPRERLIKLNTNENPYPPAPGVEQVLREFPVDHLRLYPDPSATALREALAETYDVATEQVFVGNGSDEVLALAFQAFFRQSRPLLMPAISYSFYPVYCKLYDVAYRSVALDDQWRVPLTAFDTDNGGIVFANPNAPTGHGHSRDAIAALLERNTESVVLVDEAYVDFGGESAVPLVERFPNLLVTGTFSKSRSLAGLRLGYAIGSRELIEGLERVKDSFNSFPIDRITIDAGIAALHDRAYFEACRERVITTRERTRQRLESLGFEVMPSQSNFLFVRHETYEGRAIFGELRERGILVRHFDKEALSDFLRISIGTEDEMDSLIEALEAVCR</sequence>
<feature type="chain" id="PRO_0000319748" description="Histidinol-phosphate aminotransferase">
    <location>
        <begin position="1"/>
        <end position="351"/>
    </location>
</feature>
<feature type="modified residue" description="N6-(pyridoxal phosphate)lysine" evidence="1">
    <location>
        <position position="209"/>
    </location>
</feature>
<organism>
    <name type="scientific">Chromohalobacter salexigens (strain ATCC BAA-138 / DSM 3043 / CIP 106854 / NCIMB 13768 / 1H11)</name>
    <dbReference type="NCBI Taxonomy" id="290398"/>
    <lineage>
        <taxon>Bacteria</taxon>
        <taxon>Pseudomonadati</taxon>
        <taxon>Pseudomonadota</taxon>
        <taxon>Gammaproteobacteria</taxon>
        <taxon>Oceanospirillales</taxon>
        <taxon>Halomonadaceae</taxon>
        <taxon>Chromohalobacter</taxon>
    </lineage>
</organism>
<name>HIS8_CHRSD</name>
<comment type="catalytic activity">
    <reaction evidence="1">
        <text>L-histidinol phosphate + 2-oxoglutarate = 3-(imidazol-4-yl)-2-oxopropyl phosphate + L-glutamate</text>
        <dbReference type="Rhea" id="RHEA:23744"/>
        <dbReference type="ChEBI" id="CHEBI:16810"/>
        <dbReference type="ChEBI" id="CHEBI:29985"/>
        <dbReference type="ChEBI" id="CHEBI:57766"/>
        <dbReference type="ChEBI" id="CHEBI:57980"/>
        <dbReference type="EC" id="2.6.1.9"/>
    </reaction>
</comment>
<comment type="cofactor">
    <cofactor evidence="1">
        <name>pyridoxal 5'-phosphate</name>
        <dbReference type="ChEBI" id="CHEBI:597326"/>
    </cofactor>
</comment>
<comment type="pathway">
    <text evidence="1">Amino-acid biosynthesis; L-histidine biosynthesis; L-histidine from 5-phospho-alpha-D-ribose 1-diphosphate: step 7/9.</text>
</comment>
<comment type="subunit">
    <text evidence="1">Homodimer.</text>
</comment>
<comment type="similarity">
    <text evidence="1">Belongs to the class-II pyridoxal-phosphate-dependent aminotransferase family. Histidinol-phosphate aminotransferase subfamily.</text>
</comment>
<dbReference type="EC" id="2.6.1.9" evidence="1"/>
<dbReference type="EMBL" id="CP000285">
    <property type="protein sequence ID" value="ABE57869.1"/>
    <property type="molecule type" value="Genomic_DNA"/>
</dbReference>
<dbReference type="RefSeq" id="WP_011505815.1">
    <property type="nucleotide sequence ID" value="NC_007963.1"/>
</dbReference>
<dbReference type="SMR" id="Q1R089"/>
<dbReference type="STRING" id="290398.Csal_0507"/>
<dbReference type="GeneID" id="95333261"/>
<dbReference type="KEGG" id="csa:Csal_0507"/>
<dbReference type="eggNOG" id="COG0079">
    <property type="taxonomic scope" value="Bacteria"/>
</dbReference>
<dbReference type="HOGENOM" id="CLU_017584_3_0_6"/>
<dbReference type="OrthoDB" id="9809616at2"/>
<dbReference type="UniPathway" id="UPA00031">
    <property type="reaction ID" value="UER00012"/>
</dbReference>
<dbReference type="Proteomes" id="UP000000239">
    <property type="component" value="Chromosome"/>
</dbReference>
<dbReference type="GO" id="GO:0004400">
    <property type="term" value="F:histidinol-phosphate transaminase activity"/>
    <property type="evidence" value="ECO:0007669"/>
    <property type="project" value="UniProtKB-UniRule"/>
</dbReference>
<dbReference type="GO" id="GO:0030170">
    <property type="term" value="F:pyridoxal phosphate binding"/>
    <property type="evidence" value="ECO:0007669"/>
    <property type="project" value="InterPro"/>
</dbReference>
<dbReference type="GO" id="GO:0000105">
    <property type="term" value="P:L-histidine biosynthetic process"/>
    <property type="evidence" value="ECO:0007669"/>
    <property type="project" value="UniProtKB-UniRule"/>
</dbReference>
<dbReference type="CDD" id="cd00609">
    <property type="entry name" value="AAT_like"/>
    <property type="match status" value="1"/>
</dbReference>
<dbReference type="Gene3D" id="3.90.1150.10">
    <property type="entry name" value="Aspartate Aminotransferase, domain 1"/>
    <property type="match status" value="1"/>
</dbReference>
<dbReference type="Gene3D" id="3.40.640.10">
    <property type="entry name" value="Type I PLP-dependent aspartate aminotransferase-like (Major domain)"/>
    <property type="match status" value="1"/>
</dbReference>
<dbReference type="HAMAP" id="MF_01023">
    <property type="entry name" value="HisC_aminotrans_2"/>
    <property type="match status" value="1"/>
</dbReference>
<dbReference type="InterPro" id="IPR001917">
    <property type="entry name" value="Aminotrans_II_pyridoxalP_BS"/>
</dbReference>
<dbReference type="InterPro" id="IPR004839">
    <property type="entry name" value="Aminotransferase_I/II_large"/>
</dbReference>
<dbReference type="InterPro" id="IPR005861">
    <property type="entry name" value="HisP_aminotrans"/>
</dbReference>
<dbReference type="InterPro" id="IPR050106">
    <property type="entry name" value="HistidinolP_aminotransfase"/>
</dbReference>
<dbReference type="InterPro" id="IPR015424">
    <property type="entry name" value="PyrdxlP-dep_Trfase"/>
</dbReference>
<dbReference type="InterPro" id="IPR015421">
    <property type="entry name" value="PyrdxlP-dep_Trfase_major"/>
</dbReference>
<dbReference type="InterPro" id="IPR015422">
    <property type="entry name" value="PyrdxlP-dep_Trfase_small"/>
</dbReference>
<dbReference type="NCBIfam" id="TIGR01141">
    <property type="entry name" value="hisC"/>
    <property type="match status" value="1"/>
</dbReference>
<dbReference type="PANTHER" id="PTHR43643:SF3">
    <property type="entry name" value="HISTIDINOL-PHOSPHATE AMINOTRANSFERASE"/>
    <property type="match status" value="1"/>
</dbReference>
<dbReference type="PANTHER" id="PTHR43643">
    <property type="entry name" value="HISTIDINOL-PHOSPHATE AMINOTRANSFERASE 2"/>
    <property type="match status" value="1"/>
</dbReference>
<dbReference type="Pfam" id="PF00155">
    <property type="entry name" value="Aminotran_1_2"/>
    <property type="match status" value="1"/>
</dbReference>
<dbReference type="SUPFAM" id="SSF53383">
    <property type="entry name" value="PLP-dependent transferases"/>
    <property type="match status" value="1"/>
</dbReference>
<dbReference type="PROSITE" id="PS00599">
    <property type="entry name" value="AA_TRANSFER_CLASS_2"/>
    <property type="match status" value="1"/>
</dbReference>
<reference key="1">
    <citation type="journal article" date="2011" name="Stand. Genomic Sci.">
        <title>Complete genome sequence of the halophilic and highly halotolerant Chromohalobacter salexigens type strain (1H11(T)).</title>
        <authorList>
            <person name="Copeland A."/>
            <person name="O'Connor K."/>
            <person name="Lucas S."/>
            <person name="Lapidus A."/>
            <person name="Berry K.W."/>
            <person name="Detter J.C."/>
            <person name="Del Rio T.G."/>
            <person name="Hammon N."/>
            <person name="Dalin E."/>
            <person name="Tice H."/>
            <person name="Pitluck S."/>
            <person name="Bruce D."/>
            <person name="Goodwin L."/>
            <person name="Han C."/>
            <person name="Tapia R."/>
            <person name="Saunders E."/>
            <person name="Schmutz J."/>
            <person name="Brettin T."/>
            <person name="Larimer F."/>
            <person name="Land M."/>
            <person name="Hauser L."/>
            <person name="Vargas C."/>
            <person name="Nieto J.J."/>
            <person name="Kyrpides N.C."/>
            <person name="Ivanova N."/>
            <person name="Goker M."/>
            <person name="Klenk H.P."/>
            <person name="Csonka L.N."/>
            <person name="Woyke T."/>
        </authorList>
    </citation>
    <scope>NUCLEOTIDE SEQUENCE [LARGE SCALE GENOMIC DNA]</scope>
    <source>
        <strain>ATCC BAA-138 / DSM 3043 / CIP 106854 / NCIMB 13768 / 1H11</strain>
    </source>
</reference>
<proteinExistence type="inferred from homology"/>
<keyword id="KW-0028">Amino-acid biosynthesis</keyword>
<keyword id="KW-0032">Aminotransferase</keyword>
<keyword id="KW-0368">Histidine biosynthesis</keyword>
<keyword id="KW-0663">Pyridoxal phosphate</keyword>
<keyword id="KW-1185">Reference proteome</keyword>
<keyword id="KW-0808">Transferase</keyword>
<evidence type="ECO:0000255" key="1">
    <source>
        <dbReference type="HAMAP-Rule" id="MF_01023"/>
    </source>
</evidence>